<reference key="1">
    <citation type="journal article" date="2006" name="Mol. Biol. Evol.">
        <title>The complete chloroplast genome sequence of Pelargonium x hortorum: organization and evolution of the largest and most highly rearranged chloroplast genome of land plants.</title>
        <authorList>
            <person name="Chumley T.W."/>
            <person name="Palmer J.D."/>
            <person name="Mower J.P."/>
            <person name="Fourcade H.M."/>
            <person name="Calie P.J."/>
            <person name="Boore J.L."/>
            <person name="Jansen R.K."/>
        </authorList>
    </citation>
    <scope>NUCLEOTIDE SEQUENCE [LARGE SCALE GENOMIC DNA]</scope>
    <source>
        <strain>cv. Ringo White</strain>
    </source>
</reference>
<name>RR14_PELHO</name>
<proteinExistence type="inferred from homology"/>
<gene>
    <name evidence="1" type="primary">rps14</name>
</gene>
<comment type="function">
    <text evidence="1">Binds 16S rRNA, required for the assembly of 30S particles.</text>
</comment>
<comment type="subunit">
    <text evidence="1">Part of the 30S ribosomal subunit.</text>
</comment>
<comment type="subcellular location">
    <subcellularLocation>
        <location>Plastid</location>
        <location>Chloroplast</location>
    </subcellularLocation>
</comment>
<comment type="similarity">
    <text evidence="1">Belongs to the universal ribosomal protein uS14 family.</text>
</comment>
<protein>
    <recommendedName>
        <fullName evidence="1">Small ribosomal subunit protein uS14c</fullName>
    </recommendedName>
    <alternativeName>
        <fullName evidence="2">30S ribosomal protein S14, chloroplastic</fullName>
    </alternativeName>
</protein>
<evidence type="ECO:0000255" key="1">
    <source>
        <dbReference type="HAMAP-Rule" id="MF_00537"/>
    </source>
</evidence>
<evidence type="ECO:0000305" key="2"/>
<organism>
    <name type="scientific">Pelargonium hortorum</name>
    <name type="common">Common geranium</name>
    <name type="synonym">Pelargonium inquinans x Pelargonium zonale</name>
    <dbReference type="NCBI Taxonomy" id="4031"/>
    <lineage>
        <taxon>Eukaryota</taxon>
        <taxon>Viridiplantae</taxon>
        <taxon>Streptophyta</taxon>
        <taxon>Embryophyta</taxon>
        <taxon>Tracheophyta</taxon>
        <taxon>Spermatophyta</taxon>
        <taxon>Magnoliopsida</taxon>
        <taxon>eudicotyledons</taxon>
        <taxon>Gunneridae</taxon>
        <taxon>Pentapetalae</taxon>
        <taxon>rosids</taxon>
        <taxon>malvids</taxon>
        <taxon>Geraniales</taxon>
        <taxon>Geraniaceae</taxon>
        <taxon>Pelargonium</taxon>
    </lineage>
</organism>
<geneLocation type="chloroplast"/>
<feature type="chain" id="PRO_0000276694" description="Small ribosomal subunit protein uS14c">
    <location>
        <begin position="1"/>
        <end position="100"/>
    </location>
</feature>
<keyword id="KW-0150">Chloroplast</keyword>
<keyword id="KW-0934">Plastid</keyword>
<keyword id="KW-0687">Ribonucleoprotein</keyword>
<keyword id="KW-0689">Ribosomal protein</keyword>
<keyword id="KW-0694">RNA-binding</keyword>
<keyword id="KW-0699">rRNA-binding</keyword>
<sequence length="100" mass="12048">MAKKCWIQREKKRQKLEQKYRLIRRSSKKEIREVTSLSEKWEIQRKLQSSPRNSAPTRLRRRCFSTGRPRATYRDFGLSRHILLKMFRAGLLPGATRSSW</sequence>
<accession>Q06FW3</accession>
<dbReference type="EMBL" id="DQ897681">
    <property type="protein sequence ID" value="ABI17259.1"/>
    <property type="molecule type" value="Genomic_DNA"/>
</dbReference>
<dbReference type="RefSeq" id="YP_784068.1">
    <property type="nucleotide sequence ID" value="NC_008454.1"/>
</dbReference>
<dbReference type="SMR" id="Q06FW3"/>
<dbReference type="GeneID" id="4362807"/>
<dbReference type="GO" id="GO:0009507">
    <property type="term" value="C:chloroplast"/>
    <property type="evidence" value="ECO:0007669"/>
    <property type="project" value="UniProtKB-SubCell"/>
</dbReference>
<dbReference type="GO" id="GO:0015935">
    <property type="term" value="C:small ribosomal subunit"/>
    <property type="evidence" value="ECO:0007669"/>
    <property type="project" value="TreeGrafter"/>
</dbReference>
<dbReference type="GO" id="GO:0019843">
    <property type="term" value="F:rRNA binding"/>
    <property type="evidence" value="ECO:0007669"/>
    <property type="project" value="UniProtKB-UniRule"/>
</dbReference>
<dbReference type="GO" id="GO:0003735">
    <property type="term" value="F:structural constituent of ribosome"/>
    <property type="evidence" value="ECO:0007669"/>
    <property type="project" value="InterPro"/>
</dbReference>
<dbReference type="GO" id="GO:0006412">
    <property type="term" value="P:translation"/>
    <property type="evidence" value="ECO:0007669"/>
    <property type="project" value="UniProtKB-UniRule"/>
</dbReference>
<dbReference type="FunFam" id="1.10.287.1480:FF:000001">
    <property type="entry name" value="30S ribosomal protein S14"/>
    <property type="match status" value="1"/>
</dbReference>
<dbReference type="Gene3D" id="1.10.287.1480">
    <property type="match status" value="1"/>
</dbReference>
<dbReference type="HAMAP" id="MF_00537">
    <property type="entry name" value="Ribosomal_uS14_1"/>
    <property type="match status" value="1"/>
</dbReference>
<dbReference type="InterPro" id="IPR001209">
    <property type="entry name" value="Ribosomal_uS14"/>
</dbReference>
<dbReference type="InterPro" id="IPR023036">
    <property type="entry name" value="Ribosomal_uS14_bac/plastid"/>
</dbReference>
<dbReference type="NCBIfam" id="NF006477">
    <property type="entry name" value="PRK08881.1"/>
    <property type="match status" value="1"/>
</dbReference>
<dbReference type="PANTHER" id="PTHR19836">
    <property type="entry name" value="30S RIBOSOMAL PROTEIN S14"/>
    <property type="match status" value="1"/>
</dbReference>
<dbReference type="PANTHER" id="PTHR19836:SF19">
    <property type="entry name" value="SMALL RIBOSOMAL SUBUNIT PROTEIN US14M"/>
    <property type="match status" value="1"/>
</dbReference>
<dbReference type="Pfam" id="PF00253">
    <property type="entry name" value="Ribosomal_S14"/>
    <property type="match status" value="1"/>
</dbReference>
<dbReference type="SUPFAM" id="SSF57716">
    <property type="entry name" value="Glucocorticoid receptor-like (DNA-binding domain)"/>
    <property type="match status" value="1"/>
</dbReference>